<dbReference type="EMBL" id="CP000920">
    <property type="protein sequence ID" value="ACO21959.1"/>
    <property type="molecule type" value="Genomic_DNA"/>
</dbReference>
<dbReference type="RefSeq" id="WP_000018164.1">
    <property type="nucleotide sequence ID" value="NC_012467.1"/>
</dbReference>
<dbReference type="SMR" id="C1CI68"/>
<dbReference type="GeneID" id="45652337"/>
<dbReference type="KEGG" id="spp:SPP_0231"/>
<dbReference type="HOGENOM" id="CLU_004131_4_1_9"/>
<dbReference type="GO" id="GO:0032300">
    <property type="term" value="C:mismatch repair complex"/>
    <property type="evidence" value="ECO:0007669"/>
    <property type="project" value="InterPro"/>
</dbReference>
<dbReference type="GO" id="GO:0005524">
    <property type="term" value="F:ATP binding"/>
    <property type="evidence" value="ECO:0007669"/>
    <property type="project" value="InterPro"/>
</dbReference>
<dbReference type="GO" id="GO:0016887">
    <property type="term" value="F:ATP hydrolysis activity"/>
    <property type="evidence" value="ECO:0007669"/>
    <property type="project" value="InterPro"/>
</dbReference>
<dbReference type="GO" id="GO:0140664">
    <property type="term" value="F:ATP-dependent DNA damage sensor activity"/>
    <property type="evidence" value="ECO:0007669"/>
    <property type="project" value="InterPro"/>
</dbReference>
<dbReference type="GO" id="GO:0030983">
    <property type="term" value="F:mismatched DNA binding"/>
    <property type="evidence" value="ECO:0007669"/>
    <property type="project" value="InterPro"/>
</dbReference>
<dbReference type="GO" id="GO:0006298">
    <property type="term" value="P:mismatch repair"/>
    <property type="evidence" value="ECO:0007669"/>
    <property type="project" value="UniProtKB-UniRule"/>
</dbReference>
<dbReference type="CDD" id="cd16926">
    <property type="entry name" value="HATPase_MutL-MLH-PMS-like"/>
    <property type="match status" value="1"/>
</dbReference>
<dbReference type="CDD" id="cd00782">
    <property type="entry name" value="MutL_Trans"/>
    <property type="match status" value="1"/>
</dbReference>
<dbReference type="FunFam" id="3.30.1370.100:FF:000004">
    <property type="entry name" value="DNA mismatch repair endonuclease MutL"/>
    <property type="match status" value="1"/>
</dbReference>
<dbReference type="FunFam" id="3.30.230.10:FF:000036">
    <property type="entry name" value="DNA mismatch repair endonuclease MutL"/>
    <property type="match status" value="1"/>
</dbReference>
<dbReference type="FunFam" id="3.30.565.10:FF:000003">
    <property type="entry name" value="DNA mismatch repair endonuclease MutL"/>
    <property type="match status" value="1"/>
</dbReference>
<dbReference type="Gene3D" id="3.30.230.10">
    <property type="match status" value="1"/>
</dbReference>
<dbReference type="Gene3D" id="3.30.565.10">
    <property type="entry name" value="Histidine kinase-like ATPase, C-terminal domain"/>
    <property type="match status" value="1"/>
</dbReference>
<dbReference type="Gene3D" id="3.30.1540.20">
    <property type="entry name" value="MutL, C-terminal domain, dimerisation subdomain"/>
    <property type="match status" value="1"/>
</dbReference>
<dbReference type="Gene3D" id="3.30.1370.100">
    <property type="entry name" value="MutL, C-terminal domain, regulatory subdomain"/>
    <property type="match status" value="1"/>
</dbReference>
<dbReference type="HAMAP" id="MF_00149">
    <property type="entry name" value="DNA_mis_repair"/>
    <property type="match status" value="1"/>
</dbReference>
<dbReference type="InterPro" id="IPR014762">
    <property type="entry name" value="DNA_mismatch_repair_CS"/>
</dbReference>
<dbReference type="InterPro" id="IPR020667">
    <property type="entry name" value="DNA_mismatch_repair_MutL"/>
</dbReference>
<dbReference type="InterPro" id="IPR013507">
    <property type="entry name" value="DNA_mismatch_S5_2-like"/>
</dbReference>
<dbReference type="InterPro" id="IPR036890">
    <property type="entry name" value="HATPase_C_sf"/>
</dbReference>
<dbReference type="InterPro" id="IPR002099">
    <property type="entry name" value="MutL/Mlh/PMS"/>
</dbReference>
<dbReference type="InterPro" id="IPR038973">
    <property type="entry name" value="MutL/Mlh/Pms-like"/>
</dbReference>
<dbReference type="InterPro" id="IPR014790">
    <property type="entry name" value="MutL_C"/>
</dbReference>
<dbReference type="InterPro" id="IPR042120">
    <property type="entry name" value="MutL_C_dimsub"/>
</dbReference>
<dbReference type="InterPro" id="IPR042121">
    <property type="entry name" value="MutL_C_regsub"/>
</dbReference>
<dbReference type="InterPro" id="IPR037198">
    <property type="entry name" value="MutL_C_sf"/>
</dbReference>
<dbReference type="InterPro" id="IPR020568">
    <property type="entry name" value="Ribosomal_Su5_D2-typ_SF"/>
</dbReference>
<dbReference type="InterPro" id="IPR014721">
    <property type="entry name" value="Ribsml_uS5_D2-typ_fold_subgr"/>
</dbReference>
<dbReference type="NCBIfam" id="TIGR00585">
    <property type="entry name" value="mutl"/>
    <property type="match status" value="1"/>
</dbReference>
<dbReference type="NCBIfam" id="NF000950">
    <property type="entry name" value="PRK00095.1-3"/>
    <property type="match status" value="1"/>
</dbReference>
<dbReference type="PANTHER" id="PTHR10073">
    <property type="entry name" value="DNA MISMATCH REPAIR PROTEIN MLH, PMS, MUTL"/>
    <property type="match status" value="1"/>
</dbReference>
<dbReference type="PANTHER" id="PTHR10073:SF12">
    <property type="entry name" value="DNA MISMATCH REPAIR PROTEIN MLH1"/>
    <property type="match status" value="1"/>
</dbReference>
<dbReference type="Pfam" id="PF01119">
    <property type="entry name" value="DNA_mis_repair"/>
    <property type="match status" value="1"/>
</dbReference>
<dbReference type="Pfam" id="PF13589">
    <property type="entry name" value="HATPase_c_3"/>
    <property type="match status" value="1"/>
</dbReference>
<dbReference type="Pfam" id="PF08676">
    <property type="entry name" value="MutL_C"/>
    <property type="match status" value="1"/>
</dbReference>
<dbReference type="SMART" id="SM01340">
    <property type="entry name" value="DNA_mis_repair"/>
    <property type="match status" value="1"/>
</dbReference>
<dbReference type="SMART" id="SM00853">
    <property type="entry name" value="MutL_C"/>
    <property type="match status" value="1"/>
</dbReference>
<dbReference type="SUPFAM" id="SSF55874">
    <property type="entry name" value="ATPase domain of HSP90 chaperone/DNA topoisomerase II/histidine kinase"/>
    <property type="match status" value="1"/>
</dbReference>
<dbReference type="SUPFAM" id="SSF118116">
    <property type="entry name" value="DNA mismatch repair protein MutL"/>
    <property type="match status" value="1"/>
</dbReference>
<dbReference type="SUPFAM" id="SSF54211">
    <property type="entry name" value="Ribosomal protein S5 domain 2-like"/>
    <property type="match status" value="1"/>
</dbReference>
<dbReference type="PROSITE" id="PS00058">
    <property type="entry name" value="DNA_MISMATCH_REPAIR_1"/>
    <property type="match status" value="1"/>
</dbReference>
<protein>
    <recommendedName>
        <fullName evidence="1">DNA mismatch repair protein MutL</fullName>
    </recommendedName>
</protein>
<reference key="1">
    <citation type="journal article" date="2010" name="Genome Biol.">
        <title>Structure and dynamics of the pan-genome of Streptococcus pneumoniae and closely related species.</title>
        <authorList>
            <person name="Donati C."/>
            <person name="Hiller N.L."/>
            <person name="Tettelin H."/>
            <person name="Muzzi A."/>
            <person name="Croucher N.J."/>
            <person name="Angiuoli S.V."/>
            <person name="Oggioni M."/>
            <person name="Dunning Hotopp J.C."/>
            <person name="Hu F.Z."/>
            <person name="Riley D.R."/>
            <person name="Covacci A."/>
            <person name="Mitchell T.J."/>
            <person name="Bentley S.D."/>
            <person name="Kilian M."/>
            <person name="Ehrlich G.D."/>
            <person name="Rappuoli R."/>
            <person name="Moxon E.R."/>
            <person name="Masignani V."/>
        </authorList>
    </citation>
    <scope>NUCLEOTIDE SEQUENCE [LARGE SCALE GENOMIC DNA]</scope>
    <source>
        <strain>P1031</strain>
    </source>
</reference>
<accession>C1CI68</accession>
<evidence type="ECO:0000255" key="1">
    <source>
        <dbReference type="HAMAP-Rule" id="MF_00149"/>
    </source>
</evidence>
<sequence length="649" mass="73421">MSHIIELPEMLANQIAAGEVIERPASVVKELVENAIDAGSSQIIIEIEEAGLKKVQITDNGHGIAHDEVELALRRHATSKIKNQADLFRIRTLGFRGEALPSIASVSVLTLLTAVDGASHGTKLVARGGEVEEVIPATSPVGTKVCVEDLFFNTPARLKYMKSQQAELSHIIDIVNRLGLAHPEISFSLISDGKEMTRTAGTGQLRQAIAGIYGLVSAKKMIEIENSDLDFEISGFVSLPELTRANRNYISLFINGRYIKNFLLNRAILDGFGSKLMVGRFPLAVIHIHIDPYLADVNVHPTKQEVRISKEKELMTLVSEAIANSLKEQTLIPDALENLAKSTVRNREKVDQTILPLKENTLYYEKTEPSRPSQTEVADYQVELTDEGQDLTLFAKETLDRLTKPAKLHFAERKPANYDQLDHPELDLASIDKAYDKLEREEASSFPELEFFGQMHGTYLFAQGRDGLYIIDQHAAQERVKYEEYRESIGNVDQSQQQLLVPYIFEFPADDALRLKERMPLLEEVGVFLAEYGENQFILREHPIWMAEEEIESGIYEMCDMLLLTKEVSIKKYRAELAIMMSCKRSIKANHRIDDHSARQLLYQLSQCDNPYNCPHGRPVLVHFTKSDMEKMFRRIQENHTSLRELGKY</sequence>
<keyword id="KW-0227">DNA damage</keyword>
<keyword id="KW-0234">DNA repair</keyword>
<proteinExistence type="inferred from homology"/>
<organism>
    <name type="scientific">Streptococcus pneumoniae (strain P1031)</name>
    <dbReference type="NCBI Taxonomy" id="488223"/>
    <lineage>
        <taxon>Bacteria</taxon>
        <taxon>Bacillati</taxon>
        <taxon>Bacillota</taxon>
        <taxon>Bacilli</taxon>
        <taxon>Lactobacillales</taxon>
        <taxon>Streptococcaceae</taxon>
        <taxon>Streptococcus</taxon>
    </lineage>
</organism>
<gene>
    <name evidence="1" type="primary">mutL</name>
    <name type="ordered locus">SPP_0231</name>
</gene>
<comment type="function">
    <text evidence="1">This protein is involved in the repair of mismatches in DNA. It is required for dam-dependent methyl-directed DNA mismatch repair. May act as a 'molecular matchmaker', a protein that promotes the formation of a stable complex between two or more DNA-binding proteins in an ATP-dependent manner without itself being part of a final effector complex.</text>
</comment>
<comment type="similarity">
    <text evidence="1">Belongs to the DNA mismatch repair MutL/HexB family.</text>
</comment>
<name>MUTL_STRZP</name>
<feature type="chain" id="PRO_1000192184" description="DNA mismatch repair protein MutL">
    <location>
        <begin position="1"/>
        <end position="649"/>
    </location>
</feature>